<comment type="function">
    <text evidence="3">Oxidoreductase that promotes the persistence of M.tuberculosis in host macrophages by reprogramming the fatty acid metabolism in host mitochondria (PubMed:38986924). When localized in the host mitochondria, it potentially acts on unknown lipid substrates and converts them into products that directly or indirectly alter the lipid profile of the mitochondria (PubMed:38986924). This change in lipid profile results in increased mitochondrial membrane fluidity, enhanced endogenous fatty acid oxidation and increased mitochondrial spare respiratory capacity (PubMed:38986924). All these events eventually favor M.tuberculosis persistence in the host macrophages (PubMed:38986924). In vitro, can catalyze the NADPH-dependent reduction of palmitoyl-CoA (hexadecanoyl-CoA) (PubMed:38986924).</text>
</comment>
<comment type="catalytic activity">
    <reaction evidence="3">
        <text>hexadecanal + NADP(+) + CoA = hexadecanoyl-CoA + NADPH + H(+)</text>
        <dbReference type="Rhea" id="RHEA:27270"/>
        <dbReference type="ChEBI" id="CHEBI:15378"/>
        <dbReference type="ChEBI" id="CHEBI:17600"/>
        <dbReference type="ChEBI" id="CHEBI:57287"/>
        <dbReference type="ChEBI" id="CHEBI:57379"/>
        <dbReference type="ChEBI" id="CHEBI:57783"/>
        <dbReference type="ChEBI" id="CHEBI:58349"/>
    </reaction>
</comment>
<comment type="subcellular location">
    <subcellularLocation>
        <location evidence="3">Host mitochondrion</location>
    </subcellularLocation>
    <text evidence="3">The localization to mitochondria is independent of the predicted mitochondrial targeting sequence (MTS) but depends on specific arginine residues at the N- and C-terminal regions (PubMed:38986924). Rv0547c is not secreted by classical pathways and localization to mitochondria might occur during infection conditions by its release through extracellular vesicles or shedding by an unknown mechanism (PubMed:38986924).</text>
</comment>
<comment type="induction">
    <text evidence="3">Expression is enhanced about 10-fold during nutrient starvation and hypoxia.</text>
</comment>
<comment type="domain">
    <text evidence="3">The N-terminal region contains a predicted mitochondrial targeting sequence (MTS), but this does not appear to be required for mitochondrial localization as deletion of the MTS has no impact on localization.</text>
</comment>
<comment type="similarity">
    <text evidence="4">Belongs to the short-chain dehydrogenases/reductases (SDR) family.</text>
</comment>
<keyword id="KW-1045">Host mitochondrion</keyword>
<keyword id="KW-0443">Lipid metabolism</keyword>
<keyword id="KW-0521">NADP</keyword>
<keyword id="KW-0560">Oxidoreductase</keyword>
<keyword id="KW-1185">Reference proteome</keyword>
<keyword id="KW-0843">Virulence</keyword>
<accession>O06413</accession>
<accession>F2GNG2</accession>
<accession>I6X9B0</accession>
<accession>Q7D9N8</accession>
<organism>
    <name type="scientific">Mycobacterium tuberculosis (strain ATCC 25618 / H37Rv)</name>
    <dbReference type="NCBI Taxonomy" id="83332"/>
    <lineage>
        <taxon>Bacteria</taxon>
        <taxon>Bacillati</taxon>
        <taxon>Actinomycetota</taxon>
        <taxon>Actinomycetes</taxon>
        <taxon>Mycobacteriales</taxon>
        <taxon>Mycobacteriaceae</taxon>
        <taxon>Mycobacterium</taxon>
        <taxon>Mycobacterium tuberculosis complex</taxon>
    </lineage>
</organism>
<feature type="chain" id="PRO_0000461207" description="Fatty acyl-CoA reductase Rv0547c">
    <location>
        <begin position="1"/>
        <end position="294"/>
    </location>
</feature>
<feature type="active site" description="Proton acceptor" evidence="2">
    <location>
        <position position="192"/>
    </location>
</feature>
<feature type="binding site" evidence="1">
    <location>
        <position position="49"/>
    </location>
    <ligand>
        <name>NADP(+)</name>
        <dbReference type="ChEBI" id="CHEBI:58349"/>
    </ligand>
</feature>
<feature type="binding site" evidence="1">
    <location>
        <position position="50"/>
    </location>
    <ligand>
        <name>NADP(+)</name>
        <dbReference type="ChEBI" id="CHEBI:58349"/>
    </ligand>
</feature>
<feature type="binding site" evidence="1">
    <location>
        <position position="52"/>
    </location>
    <ligand>
        <name>NADP(+)</name>
        <dbReference type="ChEBI" id="CHEBI:58349"/>
    </ligand>
</feature>
<feature type="binding site" evidence="1">
    <location>
        <position position="72"/>
    </location>
    <ligand>
        <name>NADP(+)</name>
        <dbReference type="ChEBI" id="CHEBI:58349"/>
    </ligand>
</feature>
<feature type="binding site" evidence="1">
    <location>
        <position position="97"/>
    </location>
    <ligand>
        <name>NADP(+)</name>
        <dbReference type="ChEBI" id="CHEBI:58349"/>
    </ligand>
</feature>
<feature type="binding site" evidence="1">
    <location>
        <position position="98"/>
    </location>
    <ligand>
        <name>NADP(+)</name>
        <dbReference type="ChEBI" id="CHEBI:58349"/>
    </ligand>
</feature>
<feature type="binding site" evidence="1">
    <location>
        <position position="124"/>
    </location>
    <ligand>
        <name>NADP(+)</name>
        <dbReference type="ChEBI" id="CHEBI:58349"/>
    </ligand>
</feature>
<feature type="binding site" evidence="1">
    <location>
        <position position="192"/>
    </location>
    <ligand>
        <name>NADP(+)</name>
        <dbReference type="ChEBI" id="CHEBI:58349"/>
    </ligand>
</feature>
<feature type="binding site" evidence="1">
    <location>
        <position position="196"/>
    </location>
    <ligand>
        <name>NADP(+)</name>
        <dbReference type="ChEBI" id="CHEBI:58349"/>
    </ligand>
</feature>
<feature type="binding site" evidence="1">
    <location>
        <position position="225"/>
    </location>
    <ligand>
        <name>NADP(+)</name>
        <dbReference type="ChEBI" id="CHEBI:58349"/>
    </ligand>
</feature>
<feature type="binding site" evidence="1">
    <location>
        <position position="227"/>
    </location>
    <ligand>
        <name>NADP(+)</name>
        <dbReference type="ChEBI" id="CHEBI:58349"/>
    </ligand>
</feature>
<feature type="mutagenesis site" description="Localizes to host mitochondria." evidence="3">
    <location>
        <begin position="1"/>
        <end position="65"/>
    </location>
</feature>
<feature type="mutagenesis site" description="Localizes to host mitochondria; when associated with E-7. Defective in mitochondrial localization; when associated with E-7; E-287 and E-288." evidence="3">
    <original>R</original>
    <variation>E</variation>
    <location>
        <position position="4"/>
    </location>
</feature>
<feature type="mutagenesis site" description="Localizes to host mitochondria; when associated with E-4. Defective in mitochondrial localization; when associated with E-4; E-287 and E-288." evidence="3">
    <original>R</original>
    <variation>E</variation>
    <location>
        <position position="7"/>
    </location>
</feature>
<feature type="mutagenesis site" description="Localizes to host mitochondria; when associated with E-288. Defective in mitochondrial localization; when associated with E-4; E-7 and E-288." evidence="3">
    <original>R</original>
    <variation>E</variation>
    <location>
        <position position="287"/>
    </location>
</feature>
<feature type="mutagenesis site" description="Localizes to host mitochondria; when associated with E-287. Defective in mitochondrial localization; when associated with E-4; E-7 and E-287." evidence="3">
    <original>R</original>
    <variation>E</variation>
    <location>
        <position position="288"/>
    </location>
</feature>
<protein>
    <recommendedName>
        <fullName evidence="4">Fatty acyl-CoA reductase Rv0547c</fullName>
        <ecNumber evidence="3">1.2.1.-</ecNumber>
    </recommendedName>
</protein>
<reference key="1">
    <citation type="journal article" date="1998" name="Nature">
        <title>Deciphering the biology of Mycobacterium tuberculosis from the complete genome sequence.</title>
        <authorList>
            <person name="Cole S.T."/>
            <person name="Brosch R."/>
            <person name="Parkhill J."/>
            <person name="Garnier T."/>
            <person name="Churcher C.M."/>
            <person name="Harris D.E."/>
            <person name="Gordon S.V."/>
            <person name="Eiglmeier K."/>
            <person name="Gas S."/>
            <person name="Barry C.E. III"/>
            <person name="Tekaia F."/>
            <person name="Badcock K."/>
            <person name="Basham D."/>
            <person name="Brown D."/>
            <person name="Chillingworth T."/>
            <person name="Connor R."/>
            <person name="Davies R.M."/>
            <person name="Devlin K."/>
            <person name="Feltwell T."/>
            <person name="Gentles S."/>
            <person name="Hamlin N."/>
            <person name="Holroyd S."/>
            <person name="Hornsby T."/>
            <person name="Jagels K."/>
            <person name="Krogh A."/>
            <person name="McLean J."/>
            <person name="Moule S."/>
            <person name="Murphy L.D."/>
            <person name="Oliver S."/>
            <person name="Osborne J."/>
            <person name="Quail M.A."/>
            <person name="Rajandream M.A."/>
            <person name="Rogers J."/>
            <person name="Rutter S."/>
            <person name="Seeger K."/>
            <person name="Skelton S."/>
            <person name="Squares S."/>
            <person name="Squares R."/>
            <person name="Sulston J.E."/>
            <person name="Taylor K."/>
            <person name="Whitehead S."/>
            <person name="Barrell B.G."/>
        </authorList>
    </citation>
    <scope>NUCLEOTIDE SEQUENCE [LARGE SCALE GENOMIC DNA]</scope>
    <source>
        <strain>ATCC 25618 / H37Rv</strain>
    </source>
</reference>
<reference key="2">
    <citation type="journal article" date="2011" name="Mol. Cell. Proteomics">
        <title>Proteogenomic analysis of Mycobacterium tuberculosis by high resolution mass spectrometry.</title>
        <authorList>
            <person name="Kelkar D.S."/>
            <person name="Kumar D."/>
            <person name="Kumar P."/>
            <person name="Balakrishnan L."/>
            <person name="Muthusamy B."/>
            <person name="Yadav A.K."/>
            <person name="Shrivastava P."/>
            <person name="Marimuthu A."/>
            <person name="Anand S."/>
            <person name="Sundaram H."/>
            <person name="Kingsbury R."/>
            <person name="Harsha H.C."/>
            <person name="Nair B."/>
            <person name="Prasad T.S."/>
            <person name="Chauhan D.S."/>
            <person name="Katoch K."/>
            <person name="Katoch V.M."/>
            <person name="Kumar P."/>
            <person name="Chaerkady R."/>
            <person name="Ramachandran S."/>
            <person name="Dash D."/>
            <person name="Pandey A."/>
        </authorList>
    </citation>
    <scope>IDENTIFICATION BY MASS SPECTROMETRY [LARGE SCALE ANALYSIS]</scope>
    <source>
        <strain>ATCC 25618 / H37Rv</strain>
    </source>
</reference>
<reference key="3">
    <citation type="journal article" date="2024" name="Mitochondrion">
        <title>Rv0547c, a functional oxidoreductase, supports Mycobacterium tuberculosis persistence by reprogramming host mitochondrial fatty acid metabolism.</title>
        <authorList>
            <person name="Medikonda J."/>
            <person name="Wankar N."/>
            <person name="Asalla S."/>
            <person name="Raja S.O."/>
            <person name="Yandrapally S."/>
            <person name="Jindal H."/>
            <person name="Agarwal A."/>
            <person name="Pant C."/>
            <person name="Kalivendi S.V."/>
            <person name="Kumar Dubey H."/>
            <person name="Mohareer K."/>
            <person name="Gulyani A."/>
            <person name="Banerjee S."/>
        </authorList>
    </citation>
    <scope>FUNCTION</scope>
    <scope>CATALYTIC ACTIVITY</scope>
    <scope>SUBCELLULAR LOCATION</scope>
    <scope>INDUCTION</scope>
    <scope>DOMAIN</scope>
    <scope>MUTAGENESIS OF 1-MET--PRO-651; ARG-4; ARG-7; ARG-287 AND ARG-288</scope>
    <source>
        <strain>H37Rv</strain>
    </source>
</reference>
<name>OX547_MYCTU</name>
<gene>
    <name evidence="5" type="ordered locus">Rv0547c</name>
</gene>
<proteinExistence type="evidence at protein level"/>
<sequence>MSKRPLRWLTEQITLAGMRPPISPQLLINRPAMQPVDLTGKRILLTGASSGIGAAATKQFGLHRAVVVAVARRKDLLDAVADRITGDGGTAMSLPCDLSDMEAIDALVEDVEKRIGGIDILINNAGRSIRRPLAESLERWHDVERTMVLNYYAPLRLIRGLAPGMLERGDGHIINVATWGVLSEASPLFSVYNASKAALSAVSRIIETEWGSQGVHSTTLYYPLVATPMIAPTKAYDGLPALTAAEAAEWMVTAARTRPVRIAPRVAVAVNALDSIGPRWVNALMQRRNEQLNP</sequence>
<evidence type="ECO:0000250" key="1">
    <source>
        <dbReference type="UniProtKB" id="P16544"/>
    </source>
</evidence>
<evidence type="ECO:0000255" key="2">
    <source>
        <dbReference type="PROSITE-ProRule" id="PRU10001"/>
    </source>
</evidence>
<evidence type="ECO:0000269" key="3">
    <source>
    </source>
</evidence>
<evidence type="ECO:0000305" key="4"/>
<evidence type="ECO:0000312" key="5">
    <source>
        <dbReference type="EMBL" id="CCP43285.1"/>
    </source>
</evidence>
<dbReference type="EC" id="1.2.1.-" evidence="3"/>
<dbReference type="EMBL" id="AL123456">
    <property type="protein sequence ID" value="CCP43285.1"/>
    <property type="molecule type" value="Genomic_DNA"/>
</dbReference>
<dbReference type="RefSeq" id="NP_215061.1">
    <property type="nucleotide sequence ID" value="NC_000962.3"/>
</dbReference>
<dbReference type="RefSeq" id="WP_003402909.1">
    <property type="nucleotide sequence ID" value="NZ_NVQJ01000036.1"/>
</dbReference>
<dbReference type="SMR" id="O06413"/>
<dbReference type="FunCoup" id="O06413">
    <property type="interactions" value="2"/>
</dbReference>
<dbReference type="STRING" id="83332.Rv0547c"/>
<dbReference type="PaxDb" id="83332-Rv0547c"/>
<dbReference type="DNASU" id="887527"/>
<dbReference type="GeneID" id="887527"/>
<dbReference type="KEGG" id="mtu:Rv0547c"/>
<dbReference type="KEGG" id="mtv:RVBD_0547c"/>
<dbReference type="PATRIC" id="fig|83332.111.peg.603"/>
<dbReference type="TubercuList" id="Rv0547c"/>
<dbReference type="eggNOG" id="COG0300">
    <property type="taxonomic scope" value="Bacteria"/>
</dbReference>
<dbReference type="InParanoid" id="O06413"/>
<dbReference type="OrthoDB" id="9810734at2"/>
<dbReference type="PhylomeDB" id="O06413"/>
<dbReference type="Proteomes" id="UP000001584">
    <property type="component" value="Chromosome"/>
</dbReference>
<dbReference type="GO" id="GO:0033650">
    <property type="term" value="C:host cell mitochondrion"/>
    <property type="evidence" value="ECO:0007669"/>
    <property type="project" value="UniProtKB-SubCell"/>
</dbReference>
<dbReference type="GO" id="GO:0016020">
    <property type="term" value="C:membrane"/>
    <property type="evidence" value="ECO:0000318"/>
    <property type="project" value="GO_Central"/>
</dbReference>
<dbReference type="GO" id="GO:0016491">
    <property type="term" value="F:oxidoreductase activity"/>
    <property type="evidence" value="ECO:0007669"/>
    <property type="project" value="UniProtKB-KW"/>
</dbReference>
<dbReference type="GO" id="GO:0006629">
    <property type="term" value="P:lipid metabolic process"/>
    <property type="evidence" value="ECO:0007669"/>
    <property type="project" value="UniProtKB-KW"/>
</dbReference>
<dbReference type="CDD" id="cd05233">
    <property type="entry name" value="SDR_c"/>
    <property type="match status" value="1"/>
</dbReference>
<dbReference type="Gene3D" id="3.40.50.720">
    <property type="entry name" value="NAD(P)-binding Rossmann-like Domain"/>
    <property type="match status" value="1"/>
</dbReference>
<dbReference type="InterPro" id="IPR036291">
    <property type="entry name" value="NAD(P)-bd_dom_sf"/>
</dbReference>
<dbReference type="InterPro" id="IPR002347">
    <property type="entry name" value="SDR_fam"/>
</dbReference>
<dbReference type="NCBIfam" id="NF004521">
    <property type="entry name" value="PRK05866.1"/>
    <property type="match status" value="1"/>
</dbReference>
<dbReference type="PANTHER" id="PTHR44196">
    <property type="entry name" value="DEHYDROGENASE/REDUCTASE SDR FAMILY MEMBER 7B"/>
    <property type="match status" value="1"/>
</dbReference>
<dbReference type="PANTHER" id="PTHR44196:SF1">
    <property type="entry name" value="DEHYDROGENASE_REDUCTASE SDR FAMILY MEMBER 7B"/>
    <property type="match status" value="1"/>
</dbReference>
<dbReference type="Pfam" id="PF00106">
    <property type="entry name" value="adh_short"/>
    <property type="match status" value="1"/>
</dbReference>
<dbReference type="PRINTS" id="PR00081">
    <property type="entry name" value="GDHRDH"/>
</dbReference>
<dbReference type="PRINTS" id="PR00080">
    <property type="entry name" value="SDRFAMILY"/>
</dbReference>
<dbReference type="SUPFAM" id="SSF51735">
    <property type="entry name" value="NAD(P)-binding Rossmann-fold domains"/>
    <property type="match status" value="1"/>
</dbReference>